<evidence type="ECO:0000250" key="1"/>
<evidence type="ECO:0000255" key="2"/>
<evidence type="ECO:0000305" key="3"/>
<protein>
    <recommendedName>
        <fullName>Coenzyme Q-binding protein COQ10, mitochondrial</fullName>
    </recommendedName>
</protein>
<accession>Q8MLL3</accession>
<accession>Q29R00</accession>
<accession>Q6NN87</accession>
<accession>Q7KRP4</accession>
<accession>Q9V9C2</accession>
<sequence length="242" mass="27632">MLKGSTLKALDVRILWPLIETRSAGKCKLHNPRPTPNRNIAAAKLIVTLRLLLSCCSGGHQRSFSSSTHRSYITFNDFRKKHRWYTKKELVGYSMQDMYSVVSDVSNYHKFVPYVKRSDVHSRGSEGFKADLIVGFPPLNEAYTSQVTLVPPSLVKSECHDGRLFNYLLNEWSFKPGLKDIPNSCVLDFKVSFEFKSLLHSNVANIFFDLICDQMENAFIQEVRRRSGPPSIRSHVLTSDRS</sequence>
<proteinExistence type="evidence at transcript level"/>
<dbReference type="EMBL" id="AE013599">
    <property type="protein sequence ID" value="AAF57372.1"/>
    <property type="molecule type" value="Genomic_DNA"/>
</dbReference>
<dbReference type="EMBL" id="AE013599">
    <property type="protein sequence ID" value="AAM68384.1"/>
    <property type="molecule type" value="Genomic_DNA"/>
</dbReference>
<dbReference type="EMBL" id="AE013599">
    <property type="protein sequence ID" value="AAS64779.2"/>
    <property type="molecule type" value="Genomic_DNA"/>
</dbReference>
<dbReference type="EMBL" id="BT011406">
    <property type="protein sequence ID" value="AAR96198.1"/>
    <property type="molecule type" value="mRNA"/>
</dbReference>
<dbReference type="EMBL" id="BT024240">
    <property type="protein sequence ID" value="ABC86302.1"/>
    <property type="molecule type" value="mRNA"/>
</dbReference>
<dbReference type="RefSeq" id="NP_610221.1">
    <molecule id="Q8MLL3-2"/>
    <property type="nucleotide sequence ID" value="NM_136377.5"/>
</dbReference>
<dbReference type="RefSeq" id="NP_724484.1">
    <molecule id="Q8MLL3-1"/>
    <property type="nucleotide sequence ID" value="NM_165481.5"/>
</dbReference>
<dbReference type="SMR" id="Q8MLL3"/>
<dbReference type="BioGRID" id="61466">
    <property type="interactions" value="1"/>
</dbReference>
<dbReference type="FunCoup" id="Q8MLL3">
    <property type="interactions" value="472"/>
</dbReference>
<dbReference type="STRING" id="7227.FBpp0085450"/>
<dbReference type="PaxDb" id="7227-FBpp0085450"/>
<dbReference type="DNASU" id="35568"/>
<dbReference type="EnsemblMetazoa" id="FBtr0086115">
    <molecule id="Q8MLL3-2"/>
    <property type="protein sequence ID" value="FBpp0085449"/>
    <property type="gene ID" value="FBgn0033086"/>
</dbReference>
<dbReference type="EnsemblMetazoa" id="FBtr0086116">
    <molecule id="Q8MLL3-1"/>
    <property type="protein sequence ID" value="FBpp0085450"/>
    <property type="gene ID" value="FBgn0033086"/>
</dbReference>
<dbReference type="GeneID" id="35568"/>
<dbReference type="KEGG" id="dme:Dmel_CG9410"/>
<dbReference type="UCSC" id="CG9410-RA">
    <molecule id="Q8MLL3-1"/>
    <property type="organism name" value="d. melanogaster"/>
</dbReference>
<dbReference type="AGR" id="FB:FBgn0033086"/>
<dbReference type="FlyBase" id="FBgn0033086">
    <property type="gene designation" value="CG9410"/>
</dbReference>
<dbReference type="VEuPathDB" id="VectorBase:FBgn0033086"/>
<dbReference type="eggNOG" id="KOG3177">
    <property type="taxonomic scope" value="Eukaryota"/>
</dbReference>
<dbReference type="GeneTree" id="ENSGT00940000173806"/>
<dbReference type="InParanoid" id="Q8MLL3"/>
<dbReference type="OMA" id="VKAECVD"/>
<dbReference type="OrthoDB" id="292693at2759"/>
<dbReference type="PhylomeDB" id="Q8MLL3"/>
<dbReference type="Reactome" id="R-DME-611105">
    <property type="pathway name" value="Respiratory electron transport"/>
</dbReference>
<dbReference type="Reactome" id="R-DME-9864848">
    <property type="pathway name" value="Complex IV assembly"/>
</dbReference>
<dbReference type="BioGRID-ORCS" id="35568">
    <property type="hits" value="1 hit in 3 CRISPR screens"/>
</dbReference>
<dbReference type="GenomeRNAi" id="35568"/>
<dbReference type="PRO" id="PR:Q8MLL3"/>
<dbReference type="Proteomes" id="UP000000803">
    <property type="component" value="Chromosome 2R"/>
</dbReference>
<dbReference type="Bgee" id="FBgn0033086">
    <property type="expression patterns" value="Expressed in early elongation stage spermatid (Drosophila) in testis and 167 other cell types or tissues"/>
</dbReference>
<dbReference type="ExpressionAtlas" id="Q8MLL3">
    <property type="expression patterns" value="baseline and differential"/>
</dbReference>
<dbReference type="GO" id="GO:0005743">
    <property type="term" value="C:mitochondrial inner membrane"/>
    <property type="evidence" value="ECO:0000250"/>
    <property type="project" value="UniProtKB"/>
</dbReference>
<dbReference type="GO" id="GO:0005739">
    <property type="term" value="C:mitochondrion"/>
    <property type="evidence" value="ECO:0000318"/>
    <property type="project" value="GO_Central"/>
</dbReference>
<dbReference type="GO" id="GO:0048039">
    <property type="term" value="F:ubiquinone binding"/>
    <property type="evidence" value="ECO:0007669"/>
    <property type="project" value="InterPro"/>
</dbReference>
<dbReference type="GO" id="GO:0045333">
    <property type="term" value="P:cellular respiration"/>
    <property type="evidence" value="ECO:0007669"/>
    <property type="project" value="InterPro"/>
</dbReference>
<dbReference type="CDD" id="cd07813">
    <property type="entry name" value="COQ10p_like"/>
    <property type="match status" value="1"/>
</dbReference>
<dbReference type="FunFam" id="3.30.530.20:FF:000037">
    <property type="entry name" value="Coenzyme Q-binding protein COQ10, mitochondrial"/>
    <property type="match status" value="1"/>
</dbReference>
<dbReference type="Gene3D" id="3.30.530.20">
    <property type="match status" value="1"/>
</dbReference>
<dbReference type="InterPro" id="IPR044996">
    <property type="entry name" value="COQ10-like"/>
</dbReference>
<dbReference type="InterPro" id="IPR005031">
    <property type="entry name" value="COQ10_START"/>
</dbReference>
<dbReference type="InterPro" id="IPR023393">
    <property type="entry name" value="START-like_dom_sf"/>
</dbReference>
<dbReference type="PANTHER" id="PTHR12901:SF10">
    <property type="entry name" value="COENZYME Q-BINDING PROTEIN COQ10, MITOCHONDRIAL"/>
    <property type="match status" value="1"/>
</dbReference>
<dbReference type="PANTHER" id="PTHR12901">
    <property type="entry name" value="SPERM PROTEIN HOMOLOG"/>
    <property type="match status" value="1"/>
</dbReference>
<dbReference type="Pfam" id="PF03364">
    <property type="entry name" value="Polyketide_cyc"/>
    <property type="match status" value="1"/>
</dbReference>
<dbReference type="SUPFAM" id="SSF55961">
    <property type="entry name" value="Bet v1-like"/>
    <property type="match status" value="1"/>
</dbReference>
<keyword id="KW-0025">Alternative splicing</keyword>
<keyword id="KW-0472">Membrane</keyword>
<keyword id="KW-0496">Mitochondrion</keyword>
<keyword id="KW-0999">Mitochondrion inner membrane</keyword>
<keyword id="KW-1185">Reference proteome</keyword>
<keyword id="KW-0809">Transit peptide</keyword>
<gene>
    <name type="primary">Coq10</name>
    <name type="ORF">CG9410</name>
</gene>
<comment type="function">
    <text evidence="1">Required for the function of coenzyme Q in the respiratory chain. May serve as a chaperone or may be involved in the transport of Q6 from its site of synthesis to the catalytic sites of the respiratory complexes (By similarity).</text>
</comment>
<comment type="subunit">
    <text evidence="1">Interacts with coenzyme Q.</text>
</comment>
<comment type="subcellular location">
    <subcellularLocation>
        <location evidence="1">Mitochondrion inner membrane</location>
        <topology evidence="1">Peripheral membrane protein</topology>
        <orientation evidence="1">Matrix side</orientation>
    </subcellularLocation>
</comment>
<comment type="alternative products">
    <event type="alternative splicing"/>
    <isoform>
        <id>Q8MLL3-1</id>
        <name>B</name>
        <name>D</name>
        <sequence type="displayed"/>
    </isoform>
    <isoform>
        <id>Q8MLL3-2</id>
        <name>A</name>
        <sequence type="described" ref="VSP_017688"/>
    </isoform>
</comment>
<comment type="similarity">
    <text evidence="3">Belongs to the COQ10 family.</text>
</comment>
<organism>
    <name type="scientific">Drosophila melanogaster</name>
    <name type="common">Fruit fly</name>
    <dbReference type="NCBI Taxonomy" id="7227"/>
    <lineage>
        <taxon>Eukaryota</taxon>
        <taxon>Metazoa</taxon>
        <taxon>Ecdysozoa</taxon>
        <taxon>Arthropoda</taxon>
        <taxon>Hexapoda</taxon>
        <taxon>Insecta</taxon>
        <taxon>Pterygota</taxon>
        <taxon>Neoptera</taxon>
        <taxon>Endopterygota</taxon>
        <taxon>Diptera</taxon>
        <taxon>Brachycera</taxon>
        <taxon>Muscomorpha</taxon>
        <taxon>Ephydroidea</taxon>
        <taxon>Drosophilidae</taxon>
        <taxon>Drosophila</taxon>
        <taxon>Sophophora</taxon>
    </lineage>
</organism>
<feature type="transit peptide" description="Mitochondrion" evidence="2">
    <location>
        <begin position="1"/>
        <end status="unknown"/>
    </location>
</feature>
<feature type="chain" id="PRO_0000228653" description="Coenzyme Q-binding protein COQ10, mitochondrial">
    <location>
        <begin status="unknown"/>
        <end position="242"/>
    </location>
</feature>
<feature type="splice variant" id="VSP_017688" description="In isoform A." evidence="3">
    <location>
        <begin position="22"/>
        <end position="56"/>
    </location>
</feature>
<feature type="sequence conflict" description="In Ref. 3; AAR96198." evidence="3" ref="3">
    <original>PLI</original>
    <variation>LVP</variation>
    <location>
        <begin position="17"/>
        <end position="19"/>
    </location>
</feature>
<feature type="sequence conflict" description="In Ref. 3; AAR96198." evidence="3" ref="3">
    <original>D</original>
    <variation>E</variation>
    <location>
        <position position="240"/>
    </location>
</feature>
<name>COQ10_DROME</name>
<reference key="1">
    <citation type="journal article" date="2000" name="Science">
        <title>The genome sequence of Drosophila melanogaster.</title>
        <authorList>
            <person name="Adams M.D."/>
            <person name="Celniker S.E."/>
            <person name="Holt R.A."/>
            <person name="Evans C.A."/>
            <person name="Gocayne J.D."/>
            <person name="Amanatides P.G."/>
            <person name="Scherer S.E."/>
            <person name="Li P.W."/>
            <person name="Hoskins R.A."/>
            <person name="Galle R.F."/>
            <person name="George R.A."/>
            <person name="Lewis S.E."/>
            <person name="Richards S."/>
            <person name="Ashburner M."/>
            <person name="Henderson S.N."/>
            <person name="Sutton G.G."/>
            <person name="Wortman J.R."/>
            <person name="Yandell M.D."/>
            <person name="Zhang Q."/>
            <person name="Chen L.X."/>
            <person name="Brandon R.C."/>
            <person name="Rogers Y.-H.C."/>
            <person name="Blazej R.G."/>
            <person name="Champe M."/>
            <person name="Pfeiffer B.D."/>
            <person name="Wan K.H."/>
            <person name="Doyle C."/>
            <person name="Baxter E.G."/>
            <person name="Helt G."/>
            <person name="Nelson C.R."/>
            <person name="Miklos G.L.G."/>
            <person name="Abril J.F."/>
            <person name="Agbayani A."/>
            <person name="An H.-J."/>
            <person name="Andrews-Pfannkoch C."/>
            <person name="Baldwin D."/>
            <person name="Ballew R.M."/>
            <person name="Basu A."/>
            <person name="Baxendale J."/>
            <person name="Bayraktaroglu L."/>
            <person name="Beasley E.M."/>
            <person name="Beeson K.Y."/>
            <person name="Benos P.V."/>
            <person name="Berman B.P."/>
            <person name="Bhandari D."/>
            <person name="Bolshakov S."/>
            <person name="Borkova D."/>
            <person name="Botchan M.R."/>
            <person name="Bouck J."/>
            <person name="Brokstein P."/>
            <person name="Brottier P."/>
            <person name="Burtis K.C."/>
            <person name="Busam D.A."/>
            <person name="Butler H."/>
            <person name="Cadieu E."/>
            <person name="Center A."/>
            <person name="Chandra I."/>
            <person name="Cherry J.M."/>
            <person name="Cawley S."/>
            <person name="Dahlke C."/>
            <person name="Davenport L.B."/>
            <person name="Davies P."/>
            <person name="de Pablos B."/>
            <person name="Delcher A."/>
            <person name="Deng Z."/>
            <person name="Mays A.D."/>
            <person name="Dew I."/>
            <person name="Dietz S.M."/>
            <person name="Dodson K."/>
            <person name="Doup L.E."/>
            <person name="Downes M."/>
            <person name="Dugan-Rocha S."/>
            <person name="Dunkov B.C."/>
            <person name="Dunn P."/>
            <person name="Durbin K.J."/>
            <person name="Evangelista C.C."/>
            <person name="Ferraz C."/>
            <person name="Ferriera S."/>
            <person name="Fleischmann W."/>
            <person name="Fosler C."/>
            <person name="Gabrielian A.E."/>
            <person name="Garg N.S."/>
            <person name="Gelbart W.M."/>
            <person name="Glasser K."/>
            <person name="Glodek A."/>
            <person name="Gong F."/>
            <person name="Gorrell J.H."/>
            <person name="Gu Z."/>
            <person name="Guan P."/>
            <person name="Harris M."/>
            <person name="Harris N.L."/>
            <person name="Harvey D.A."/>
            <person name="Heiman T.J."/>
            <person name="Hernandez J.R."/>
            <person name="Houck J."/>
            <person name="Hostin D."/>
            <person name="Houston K.A."/>
            <person name="Howland T.J."/>
            <person name="Wei M.-H."/>
            <person name="Ibegwam C."/>
            <person name="Jalali M."/>
            <person name="Kalush F."/>
            <person name="Karpen G.H."/>
            <person name="Ke Z."/>
            <person name="Kennison J.A."/>
            <person name="Ketchum K.A."/>
            <person name="Kimmel B.E."/>
            <person name="Kodira C.D."/>
            <person name="Kraft C.L."/>
            <person name="Kravitz S."/>
            <person name="Kulp D."/>
            <person name="Lai Z."/>
            <person name="Lasko P."/>
            <person name="Lei Y."/>
            <person name="Levitsky A.A."/>
            <person name="Li J.H."/>
            <person name="Li Z."/>
            <person name="Liang Y."/>
            <person name="Lin X."/>
            <person name="Liu X."/>
            <person name="Mattei B."/>
            <person name="McIntosh T.C."/>
            <person name="McLeod M.P."/>
            <person name="McPherson D."/>
            <person name="Merkulov G."/>
            <person name="Milshina N.V."/>
            <person name="Mobarry C."/>
            <person name="Morris J."/>
            <person name="Moshrefi A."/>
            <person name="Mount S.M."/>
            <person name="Moy M."/>
            <person name="Murphy B."/>
            <person name="Murphy L."/>
            <person name="Muzny D.M."/>
            <person name="Nelson D.L."/>
            <person name="Nelson D.R."/>
            <person name="Nelson K.A."/>
            <person name="Nixon K."/>
            <person name="Nusskern D.R."/>
            <person name="Pacleb J.M."/>
            <person name="Palazzolo M."/>
            <person name="Pittman G.S."/>
            <person name="Pan S."/>
            <person name="Pollard J."/>
            <person name="Puri V."/>
            <person name="Reese M.G."/>
            <person name="Reinert K."/>
            <person name="Remington K."/>
            <person name="Saunders R.D.C."/>
            <person name="Scheeler F."/>
            <person name="Shen H."/>
            <person name="Shue B.C."/>
            <person name="Siden-Kiamos I."/>
            <person name="Simpson M."/>
            <person name="Skupski M.P."/>
            <person name="Smith T.J."/>
            <person name="Spier E."/>
            <person name="Spradling A.C."/>
            <person name="Stapleton M."/>
            <person name="Strong R."/>
            <person name="Sun E."/>
            <person name="Svirskas R."/>
            <person name="Tector C."/>
            <person name="Turner R."/>
            <person name="Venter E."/>
            <person name="Wang A.H."/>
            <person name="Wang X."/>
            <person name="Wang Z.-Y."/>
            <person name="Wassarman D.A."/>
            <person name="Weinstock G.M."/>
            <person name="Weissenbach J."/>
            <person name="Williams S.M."/>
            <person name="Woodage T."/>
            <person name="Worley K.C."/>
            <person name="Wu D."/>
            <person name="Yang S."/>
            <person name="Yao Q.A."/>
            <person name="Ye J."/>
            <person name="Yeh R.-F."/>
            <person name="Zaveri J.S."/>
            <person name="Zhan M."/>
            <person name="Zhang G."/>
            <person name="Zhao Q."/>
            <person name="Zheng L."/>
            <person name="Zheng X.H."/>
            <person name="Zhong F.N."/>
            <person name="Zhong W."/>
            <person name="Zhou X."/>
            <person name="Zhu S.C."/>
            <person name="Zhu X."/>
            <person name="Smith H.O."/>
            <person name="Gibbs R.A."/>
            <person name="Myers E.W."/>
            <person name="Rubin G.M."/>
            <person name="Venter J.C."/>
        </authorList>
    </citation>
    <scope>NUCLEOTIDE SEQUENCE [LARGE SCALE GENOMIC DNA]</scope>
    <source>
        <strain>Berkeley</strain>
    </source>
</reference>
<reference key="2">
    <citation type="journal article" date="2002" name="Genome Biol.">
        <title>Annotation of the Drosophila melanogaster euchromatic genome: a systematic review.</title>
        <authorList>
            <person name="Misra S."/>
            <person name="Crosby M.A."/>
            <person name="Mungall C.J."/>
            <person name="Matthews B.B."/>
            <person name="Campbell K.S."/>
            <person name="Hradecky P."/>
            <person name="Huang Y."/>
            <person name="Kaminker J.S."/>
            <person name="Millburn G.H."/>
            <person name="Prochnik S.E."/>
            <person name="Smith C.D."/>
            <person name="Tupy J.L."/>
            <person name="Whitfield E.J."/>
            <person name="Bayraktaroglu L."/>
            <person name="Berman B.P."/>
            <person name="Bettencourt B.R."/>
            <person name="Celniker S.E."/>
            <person name="de Grey A.D.N.J."/>
            <person name="Drysdale R.A."/>
            <person name="Harris N.L."/>
            <person name="Richter J."/>
            <person name="Russo S."/>
            <person name="Schroeder A.J."/>
            <person name="Shu S.Q."/>
            <person name="Stapleton M."/>
            <person name="Yamada C."/>
            <person name="Ashburner M."/>
            <person name="Gelbart W.M."/>
            <person name="Rubin G.M."/>
            <person name="Lewis S.E."/>
        </authorList>
    </citation>
    <scope>GENOME REANNOTATION</scope>
    <scope>ALTERNATIVE SPLICING</scope>
    <source>
        <strain>Berkeley</strain>
    </source>
</reference>
<reference key="3">
    <citation type="submission" date="2006-01" db="EMBL/GenBank/DDBJ databases">
        <authorList>
            <person name="Stapleton M."/>
            <person name="Carlson J.W."/>
            <person name="Chavez C."/>
            <person name="Frise E."/>
            <person name="George R.A."/>
            <person name="Pacleb J.M."/>
            <person name="Park S."/>
            <person name="Wan K.H."/>
            <person name="Yu C."/>
            <person name="Rubin G.M."/>
            <person name="Celniker S.E."/>
        </authorList>
    </citation>
    <scope>NUCLEOTIDE SEQUENCE [LARGE SCALE MRNA] (ISOFORM B)</scope>
    <source>
        <strain>Berkeley</strain>
        <tissue>Testis</tissue>
    </source>
</reference>